<sequence>MSKPIVMERGVKYRDADKMALIPVKNVVTERDALLRKPEWMKIKLPADSTRIQGIKAAMRKNGLHSVCEEASCPNLAECFNHGTATFMILGAICTRRCPFCDVAHGRPVAPDAEEPQKLAQTIADMALRYVVITSVDRDDLRDGGAQHFADCITAIRAKSPEIKIETLVPDFRGRMDRALDILNATPPDVFNHNLENVPRIYRQVRPGADYNWSLKLLERFKEAHPEIPTKSGLMVGLGETNAEIIEVMRDLRRHGVTMLTLGQYLQPSRHHLPVQRYVSPEEFDEMKAEALAMGFTHAACGPFVRSSYHADLQAKGMEVK</sequence>
<comment type="function">
    <text evidence="1">Catalyzes the radical-mediated insertion of two sulfur atoms into the C-6 and C-8 positions of the octanoyl moiety bound to the lipoyl domains of lipoate-dependent enzymes, thereby converting the octanoylated domains into lipoylated derivatives.</text>
</comment>
<comment type="catalytic activity">
    <reaction evidence="1">
        <text>[[Fe-S] cluster scaffold protein carrying a second [4Fe-4S](2+) cluster] + N(6)-octanoyl-L-lysyl-[protein] + 2 oxidized [2Fe-2S]-[ferredoxin] + 2 S-adenosyl-L-methionine + 4 H(+) = [[Fe-S] cluster scaffold protein] + N(6)-[(R)-dihydrolipoyl]-L-lysyl-[protein] + 4 Fe(3+) + 2 hydrogen sulfide + 2 5'-deoxyadenosine + 2 L-methionine + 2 reduced [2Fe-2S]-[ferredoxin]</text>
        <dbReference type="Rhea" id="RHEA:16585"/>
        <dbReference type="Rhea" id="RHEA-COMP:9928"/>
        <dbReference type="Rhea" id="RHEA-COMP:10000"/>
        <dbReference type="Rhea" id="RHEA-COMP:10001"/>
        <dbReference type="Rhea" id="RHEA-COMP:10475"/>
        <dbReference type="Rhea" id="RHEA-COMP:14568"/>
        <dbReference type="Rhea" id="RHEA-COMP:14569"/>
        <dbReference type="ChEBI" id="CHEBI:15378"/>
        <dbReference type="ChEBI" id="CHEBI:17319"/>
        <dbReference type="ChEBI" id="CHEBI:29034"/>
        <dbReference type="ChEBI" id="CHEBI:29919"/>
        <dbReference type="ChEBI" id="CHEBI:33722"/>
        <dbReference type="ChEBI" id="CHEBI:33737"/>
        <dbReference type="ChEBI" id="CHEBI:33738"/>
        <dbReference type="ChEBI" id="CHEBI:57844"/>
        <dbReference type="ChEBI" id="CHEBI:59789"/>
        <dbReference type="ChEBI" id="CHEBI:78809"/>
        <dbReference type="ChEBI" id="CHEBI:83100"/>
        <dbReference type="EC" id="2.8.1.8"/>
    </reaction>
</comment>
<comment type="cofactor">
    <cofactor evidence="1">
        <name>[4Fe-4S] cluster</name>
        <dbReference type="ChEBI" id="CHEBI:49883"/>
    </cofactor>
    <text evidence="1">Binds 2 [4Fe-4S] clusters per subunit. One cluster is coordinated with 3 cysteines and an exchangeable S-adenosyl-L-methionine.</text>
</comment>
<comment type="pathway">
    <text evidence="1">Protein modification; protein lipoylation via endogenous pathway; protein N(6)-(lipoyl)lysine from octanoyl-[acyl-carrier-protein]: step 2/2.</text>
</comment>
<comment type="subcellular location">
    <subcellularLocation>
        <location evidence="1">Cytoplasm</location>
    </subcellularLocation>
</comment>
<comment type="similarity">
    <text evidence="1">Belongs to the radical SAM superfamily. Lipoyl synthase family.</text>
</comment>
<dbReference type="EC" id="2.8.1.8" evidence="1"/>
<dbReference type="EMBL" id="AM933173">
    <property type="protein sequence ID" value="CAR36533.1"/>
    <property type="molecule type" value="Genomic_DNA"/>
</dbReference>
<dbReference type="RefSeq" id="WP_000042640.1">
    <property type="nucleotide sequence ID" value="NC_011274.1"/>
</dbReference>
<dbReference type="SMR" id="B5R7Y1"/>
<dbReference type="KEGG" id="seg:SG0637"/>
<dbReference type="HOGENOM" id="CLU_033144_2_1_6"/>
<dbReference type="UniPathway" id="UPA00538">
    <property type="reaction ID" value="UER00593"/>
</dbReference>
<dbReference type="Proteomes" id="UP000008321">
    <property type="component" value="Chromosome"/>
</dbReference>
<dbReference type="GO" id="GO:0005737">
    <property type="term" value="C:cytoplasm"/>
    <property type="evidence" value="ECO:0007669"/>
    <property type="project" value="UniProtKB-SubCell"/>
</dbReference>
<dbReference type="GO" id="GO:0051539">
    <property type="term" value="F:4 iron, 4 sulfur cluster binding"/>
    <property type="evidence" value="ECO:0007669"/>
    <property type="project" value="UniProtKB-UniRule"/>
</dbReference>
<dbReference type="GO" id="GO:0016992">
    <property type="term" value="F:lipoate synthase activity"/>
    <property type="evidence" value="ECO:0007669"/>
    <property type="project" value="UniProtKB-UniRule"/>
</dbReference>
<dbReference type="GO" id="GO:0046872">
    <property type="term" value="F:metal ion binding"/>
    <property type="evidence" value="ECO:0007669"/>
    <property type="project" value="UniProtKB-KW"/>
</dbReference>
<dbReference type="CDD" id="cd01335">
    <property type="entry name" value="Radical_SAM"/>
    <property type="match status" value="1"/>
</dbReference>
<dbReference type="FunFam" id="3.20.20.70:FF:000023">
    <property type="entry name" value="Lipoyl synthase"/>
    <property type="match status" value="1"/>
</dbReference>
<dbReference type="Gene3D" id="3.20.20.70">
    <property type="entry name" value="Aldolase class I"/>
    <property type="match status" value="1"/>
</dbReference>
<dbReference type="HAMAP" id="MF_00206">
    <property type="entry name" value="Lipoyl_synth"/>
    <property type="match status" value="1"/>
</dbReference>
<dbReference type="InterPro" id="IPR013785">
    <property type="entry name" value="Aldolase_TIM"/>
</dbReference>
<dbReference type="InterPro" id="IPR006638">
    <property type="entry name" value="Elp3/MiaA/NifB-like_rSAM"/>
</dbReference>
<dbReference type="InterPro" id="IPR031691">
    <property type="entry name" value="LIAS_N"/>
</dbReference>
<dbReference type="InterPro" id="IPR003698">
    <property type="entry name" value="Lipoyl_synth"/>
</dbReference>
<dbReference type="InterPro" id="IPR007197">
    <property type="entry name" value="rSAM"/>
</dbReference>
<dbReference type="NCBIfam" id="TIGR00510">
    <property type="entry name" value="lipA"/>
    <property type="match status" value="1"/>
</dbReference>
<dbReference type="NCBIfam" id="NF004019">
    <property type="entry name" value="PRK05481.1"/>
    <property type="match status" value="1"/>
</dbReference>
<dbReference type="NCBIfam" id="NF009544">
    <property type="entry name" value="PRK12928.1"/>
    <property type="match status" value="1"/>
</dbReference>
<dbReference type="PANTHER" id="PTHR10949">
    <property type="entry name" value="LIPOYL SYNTHASE"/>
    <property type="match status" value="1"/>
</dbReference>
<dbReference type="PANTHER" id="PTHR10949:SF0">
    <property type="entry name" value="LIPOYL SYNTHASE, MITOCHONDRIAL"/>
    <property type="match status" value="1"/>
</dbReference>
<dbReference type="Pfam" id="PF16881">
    <property type="entry name" value="LIAS_N"/>
    <property type="match status" value="1"/>
</dbReference>
<dbReference type="Pfam" id="PF04055">
    <property type="entry name" value="Radical_SAM"/>
    <property type="match status" value="1"/>
</dbReference>
<dbReference type="PIRSF" id="PIRSF005963">
    <property type="entry name" value="Lipoyl_synth"/>
    <property type="match status" value="1"/>
</dbReference>
<dbReference type="SFLD" id="SFLDF00271">
    <property type="entry name" value="lipoyl_synthase"/>
    <property type="match status" value="1"/>
</dbReference>
<dbReference type="SFLD" id="SFLDS00029">
    <property type="entry name" value="Radical_SAM"/>
    <property type="match status" value="1"/>
</dbReference>
<dbReference type="SMART" id="SM00729">
    <property type="entry name" value="Elp3"/>
    <property type="match status" value="1"/>
</dbReference>
<dbReference type="SUPFAM" id="SSF102114">
    <property type="entry name" value="Radical SAM enzymes"/>
    <property type="match status" value="1"/>
</dbReference>
<dbReference type="PROSITE" id="PS51918">
    <property type="entry name" value="RADICAL_SAM"/>
    <property type="match status" value="1"/>
</dbReference>
<accession>B5R7Y1</accession>
<keyword id="KW-0004">4Fe-4S</keyword>
<keyword id="KW-0963">Cytoplasm</keyword>
<keyword id="KW-0408">Iron</keyword>
<keyword id="KW-0411">Iron-sulfur</keyword>
<keyword id="KW-0479">Metal-binding</keyword>
<keyword id="KW-0949">S-adenosyl-L-methionine</keyword>
<keyword id="KW-0808">Transferase</keyword>
<organism>
    <name type="scientific">Salmonella gallinarum (strain 287/91 / NCTC 13346)</name>
    <dbReference type="NCBI Taxonomy" id="550538"/>
    <lineage>
        <taxon>Bacteria</taxon>
        <taxon>Pseudomonadati</taxon>
        <taxon>Pseudomonadota</taxon>
        <taxon>Gammaproteobacteria</taxon>
        <taxon>Enterobacterales</taxon>
        <taxon>Enterobacteriaceae</taxon>
        <taxon>Salmonella</taxon>
    </lineage>
</organism>
<gene>
    <name evidence="1" type="primary">lipA</name>
    <name type="ordered locus">SG0637</name>
</gene>
<protein>
    <recommendedName>
        <fullName evidence="1">Lipoyl synthase</fullName>
        <ecNumber evidence="1">2.8.1.8</ecNumber>
    </recommendedName>
    <alternativeName>
        <fullName evidence="1">Lip-syn</fullName>
        <shortName evidence="1">LS</shortName>
    </alternativeName>
    <alternativeName>
        <fullName evidence="1">Lipoate synthase</fullName>
    </alternativeName>
    <alternativeName>
        <fullName evidence="1">Lipoic acid synthase</fullName>
    </alternativeName>
    <alternativeName>
        <fullName evidence="1">Sulfur insertion protein LipA</fullName>
    </alternativeName>
</protein>
<name>LIPA_SALG2</name>
<reference key="1">
    <citation type="journal article" date="2008" name="Genome Res.">
        <title>Comparative genome analysis of Salmonella enteritidis PT4 and Salmonella gallinarum 287/91 provides insights into evolutionary and host adaptation pathways.</title>
        <authorList>
            <person name="Thomson N.R."/>
            <person name="Clayton D.J."/>
            <person name="Windhorst D."/>
            <person name="Vernikos G."/>
            <person name="Davidson S."/>
            <person name="Churcher C."/>
            <person name="Quail M.A."/>
            <person name="Stevens M."/>
            <person name="Jones M.A."/>
            <person name="Watson M."/>
            <person name="Barron A."/>
            <person name="Layton A."/>
            <person name="Pickard D."/>
            <person name="Kingsley R.A."/>
            <person name="Bignell A."/>
            <person name="Clark L."/>
            <person name="Harris B."/>
            <person name="Ormond D."/>
            <person name="Abdellah Z."/>
            <person name="Brooks K."/>
            <person name="Cherevach I."/>
            <person name="Chillingworth T."/>
            <person name="Woodward J."/>
            <person name="Norberczak H."/>
            <person name="Lord A."/>
            <person name="Arrowsmith C."/>
            <person name="Jagels K."/>
            <person name="Moule S."/>
            <person name="Mungall K."/>
            <person name="Saunders M."/>
            <person name="Whitehead S."/>
            <person name="Chabalgoity J.A."/>
            <person name="Maskell D."/>
            <person name="Humphreys T."/>
            <person name="Roberts M."/>
            <person name="Barrow P.A."/>
            <person name="Dougan G."/>
            <person name="Parkhill J."/>
        </authorList>
    </citation>
    <scope>NUCLEOTIDE SEQUENCE [LARGE SCALE GENOMIC DNA]</scope>
    <source>
        <strain>287/91 / NCTC 13346</strain>
    </source>
</reference>
<feature type="chain" id="PRO_1000099630" description="Lipoyl synthase">
    <location>
        <begin position="1"/>
        <end position="321"/>
    </location>
</feature>
<feature type="domain" description="Radical SAM core" evidence="2">
    <location>
        <begin position="80"/>
        <end position="297"/>
    </location>
</feature>
<feature type="binding site" evidence="1">
    <location>
        <position position="68"/>
    </location>
    <ligand>
        <name>[4Fe-4S] cluster</name>
        <dbReference type="ChEBI" id="CHEBI:49883"/>
        <label>1</label>
    </ligand>
</feature>
<feature type="binding site" evidence="1">
    <location>
        <position position="73"/>
    </location>
    <ligand>
        <name>[4Fe-4S] cluster</name>
        <dbReference type="ChEBI" id="CHEBI:49883"/>
        <label>1</label>
    </ligand>
</feature>
<feature type="binding site" evidence="1">
    <location>
        <position position="79"/>
    </location>
    <ligand>
        <name>[4Fe-4S] cluster</name>
        <dbReference type="ChEBI" id="CHEBI:49883"/>
        <label>1</label>
    </ligand>
</feature>
<feature type="binding site" evidence="1">
    <location>
        <position position="94"/>
    </location>
    <ligand>
        <name>[4Fe-4S] cluster</name>
        <dbReference type="ChEBI" id="CHEBI:49883"/>
        <label>2</label>
        <note>4Fe-4S-S-AdoMet</note>
    </ligand>
</feature>
<feature type="binding site" evidence="1">
    <location>
        <position position="98"/>
    </location>
    <ligand>
        <name>[4Fe-4S] cluster</name>
        <dbReference type="ChEBI" id="CHEBI:49883"/>
        <label>2</label>
        <note>4Fe-4S-S-AdoMet</note>
    </ligand>
</feature>
<feature type="binding site" evidence="1">
    <location>
        <position position="101"/>
    </location>
    <ligand>
        <name>[4Fe-4S] cluster</name>
        <dbReference type="ChEBI" id="CHEBI:49883"/>
        <label>2</label>
        <note>4Fe-4S-S-AdoMet</note>
    </ligand>
</feature>
<feature type="binding site" evidence="1">
    <location>
        <position position="308"/>
    </location>
    <ligand>
        <name>[4Fe-4S] cluster</name>
        <dbReference type="ChEBI" id="CHEBI:49883"/>
        <label>1</label>
    </ligand>
</feature>
<proteinExistence type="inferred from homology"/>
<evidence type="ECO:0000255" key="1">
    <source>
        <dbReference type="HAMAP-Rule" id="MF_00206"/>
    </source>
</evidence>
<evidence type="ECO:0000255" key="2">
    <source>
        <dbReference type="PROSITE-ProRule" id="PRU01266"/>
    </source>
</evidence>